<accession>Q8NX93</accession>
<organism>
    <name type="scientific">Staphylococcus aureus (strain MW2)</name>
    <dbReference type="NCBI Taxonomy" id="196620"/>
    <lineage>
        <taxon>Bacteria</taxon>
        <taxon>Bacillati</taxon>
        <taxon>Bacillota</taxon>
        <taxon>Bacilli</taxon>
        <taxon>Bacillales</taxon>
        <taxon>Staphylococcaceae</taxon>
        <taxon>Staphylococcus</taxon>
    </lineage>
</organism>
<gene>
    <name evidence="1" type="primary">purQ</name>
    <name type="ordered locus">MW0951</name>
</gene>
<keyword id="KW-0067">ATP-binding</keyword>
<keyword id="KW-0963">Cytoplasm</keyword>
<keyword id="KW-0315">Glutamine amidotransferase</keyword>
<keyword id="KW-0378">Hydrolase</keyword>
<keyword id="KW-0436">Ligase</keyword>
<keyword id="KW-0547">Nucleotide-binding</keyword>
<keyword id="KW-0658">Purine biosynthesis</keyword>
<sequence>MKFAVLVFPGSNCDRDMFNAAIKSGVEAEYVDYRETSLSGFDGVLIPGGFSFGDYLRSGAMASVAPIISEVKRLAAEGKPVLGVCNGFQILTEIGLLPGALLHNDSHLFISRNEELEIVNNQTAFTNLYEQGEKVIYPVAHGEGHYYCTDEIYQQLKANNQIILKYVNNPNGSYDDIAGIVNEKGNVCGMMPHPERALETLLGTDSGVKLFEAMVKSWREQHV</sequence>
<proteinExistence type="inferred from homology"/>
<reference key="1">
    <citation type="journal article" date="2002" name="Lancet">
        <title>Genome and virulence determinants of high virulence community-acquired MRSA.</title>
        <authorList>
            <person name="Baba T."/>
            <person name="Takeuchi F."/>
            <person name="Kuroda M."/>
            <person name="Yuzawa H."/>
            <person name="Aoki K."/>
            <person name="Oguchi A."/>
            <person name="Nagai Y."/>
            <person name="Iwama N."/>
            <person name="Asano K."/>
            <person name="Naimi T."/>
            <person name="Kuroda H."/>
            <person name="Cui L."/>
            <person name="Yamamoto K."/>
            <person name="Hiramatsu K."/>
        </authorList>
    </citation>
    <scope>NUCLEOTIDE SEQUENCE [LARGE SCALE GENOMIC DNA]</scope>
    <source>
        <strain>MW2</strain>
    </source>
</reference>
<name>PURQ_STAAW</name>
<comment type="function">
    <text evidence="1">Part of the phosphoribosylformylglycinamidine synthase complex involved in the purines biosynthetic pathway. Catalyzes the ATP-dependent conversion of formylglycinamide ribonucleotide (FGAR) and glutamine to yield formylglycinamidine ribonucleotide (FGAM) and glutamate. The FGAM synthase complex is composed of three subunits. PurQ produces an ammonia molecule by converting glutamine to glutamate. PurL transfers the ammonia molecule to FGAR to form FGAM in an ATP-dependent manner. PurS interacts with PurQ and PurL and is thought to assist in the transfer of the ammonia molecule from PurQ to PurL.</text>
</comment>
<comment type="catalytic activity">
    <reaction evidence="1">
        <text>N(2)-formyl-N(1)-(5-phospho-beta-D-ribosyl)glycinamide + L-glutamine + ATP + H2O = 2-formamido-N(1)-(5-O-phospho-beta-D-ribosyl)acetamidine + L-glutamate + ADP + phosphate + H(+)</text>
        <dbReference type="Rhea" id="RHEA:17129"/>
        <dbReference type="ChEBI" id="CHEBI:15377"/>
        <dbReference type="ChEBI" id="CHEBI:15378"/>
        <dbReference type="ChEBI" id="CHEBI:29985"/>
        <dbReference type="ChEBI" id="CHEBI:30616"/>
        <dbReference type="ChEBI" id="CHEBI:43474"/>
        <dbReference type="ChEBI" id="CHEBI:58359"/>
        <dbReference type="ChEBI" id="CHEBI:147286"/>
        <dbReference type="ChEBI" id="CHEBI:147287"/>
        <dbReference type="ChEBI" id="CHEBI:456216"/>
        <dbReference type="EC" id="6.3.5.3"/>
    </reaction>
</comment>
<comment type="catalytic activity">
    <reaction evidence="1">
        <text>L-glutamine + H2O = L-glutamate + NH4(+)</text>
        <dbReference type="Rhea" id="RHEA:15889"/>
        <dbReference type="ChEBI" id="CHEBI:15377"/>
        <dbReference type="ChEBI" id="CHEBI:28938"/>
        <dbReference type="ChEBI" id="CHEBI:29985"/>
        <dbReference type="ChEBI" id="CHEBI:58359"/>
        <dbReference type="EC" id="3.5.1.2"/>
    </reaction>
</comment>
<comment type="pathway">
    <text evidence="1">Purine metabolism; IMP biosynthesis via de novo pathway; 5-amino-1-(5-phospho-D-ribosyl)imidazole from N(2)-formyl-N(1)-(5-phospho-D-ribosyl)glycinamide: step 1/2.</text>
</comment>
<comment type="subunit">
    <text evidence="1">Part of the FGAM synthase complex composed of 1 PurL, 1 PurQ and 2 PurS subunits.</text>
</comment>
<comment type="subcellular location">
    <subcellularLocation>
        <location evidence="1">Cytoplasm</location>
    </subcellularLocation>
</comment>
<feature type="chain" id="PRO_0000100588" description="Phosphoribosylformylglycinamidine synthase subunit PurQ">
    <location>
        <begin position="1"/>
        <end position="223"/>
    </location>
</feature>
<feature type="domain" description="Glutamine amidotransferase type-1" evidence="1">
    <location>
        <begin position="3"/>
        <end position="223"/>
    </location>
</feature>
<feature type="active site" description="Nucleophile" evidence="1">
    <location>
        <position position="85"/>
    </location>
</feature>
<feature type="active site" evidence="1">
    <location>
        <position position="193"/>
    </location>
</feature>
<feature type="active site" evidence="1">
    <location>
        <position position="195"/>
    </location>
</feature>
<protein>
    <recommendedName>
        <fullName evidence="1">Phosphoribosylformylglycinamidine synthase subunit PurQ</fullName>
        <shortName evidence="1">FGAM synthase</shortName>
        <ecNumber evidence="1">6.3.5.3</ecNumber>
    </recommendedName>
    <alternativeName>
        <fullName evidence="1">Formylglycinamide ribonucleotide amidotransferase subunit I</fullName>
        <shortName evidence="1">FGAR amidotransferase I</shortName>
        <shortName evidence="1">FGAR-AT I</shortName>
    </alternativeName>
    <alternativeName>
        <fullName evidence="1">Glutaminase PurQ</fullName>
        <ecNumber evidence="1">3.5.1.2</ecNumber>
    </alternativeName>
    <alternativeName>
        <fullName evidence="1">Phosphoribosylformylglycinamidine synthase subunit I</fullName>
    </alternativeName>
</protein>
<dbReference type="EC" id="6.3.5.3" evidence="1"/>
<dbReference type="EC" id="3.5.1.2" evidence="1"/>
<dbReference type="EMBL" id="BA000033">
    <property type="protein sequence ID" value="BAB94816.1"/>
    <property type="molecule type" value="Genomic_DNA"/>
</dbReference>
<dbReference type="RefSeq" id="WP_000666799.1">
    <property type="nucleotide sequence ID" value="NC_003923.1"/>
</dbReference>
<dbReference type="SMR" id="Q8NX93"/>
<dbReference type="KEGG" id="sam:MW0951"/>
<dbReference type="HOGENOM" id="CLU_001031_3_1_9"/>
<dbReference type="UniPathway" id="UPA00074">
    <property type="reaction ID" value="UER00128"/>
</dbReference>
<dbReference type="GO" id="GO:0005737">
    <property type="term" value="C:cytoplasm"/>
    <property type="evidence" value="ECO:0007669"/>
    <property type="project" value="UniProtKB-SubCell"/>
</dbReference>
<dbReference type="GO" id="GO:0005524">
    <property type="term" value="F:ATP binding"/>
    <property type="evidence" value="ECO:0007669"/>
    <property type="project" value="UniProtKB-KW"/>
</dbReference>
<dbReference type="GO" id="GO:0004359">
    <property type="term" value="F:glutaminase activity"/>
    <property type="evidence" value="ECO:0007669"/>
    <property type="project" value="UniProtKB-EC"/>
</dbReference>
<dbReference type="GO" id="GO:0004642">
    <property type="term" value="F:phosphoribosylformylglycinamidine synthase activity"/>
    <property type="evidence" value="ECO:0007669"/>
    <property type="project" value="UniProtKB-UniRule"/>
</dbReference>
<dbReference type="GO" id="GO:0006189">
    <property type="term" value="P:'de novo' IMP biosynthetic process"/>
    <property type="evidence" value="ECO:0007669"/>
    <property type="project" value="UniProtKB-UniRule"/>
</dbReference>
<dbReference type="CDD" id="cd01740">
    <property type="entry name" value="GATase1_FGAR_AT"/>
    <property type="match status" value="1"/>
</dbReference>
<dbReference type="Gene3D" id="3.40.50.880">
    <property type="match status" value="1"/>
</dbReference>
<dbReference type="HAMAP" id="MF_00421">
    <property type="entry name" value="PurQ"/>
    <property type="match status" value="1"/>
</dbReference>
<dbReference type="InterPro" id="IPR029062">
    <property type="entry name" value="Class_I_gatase-like"/>
</dbReference>
<dbReference type="InterPro" id="IPR010075">
    <property type="entry name" value="PRibForGlyAmidine_synth_PurQ"/>
</dbReference>
<dbReference type="NCBIfam" id="TIGR01737">
    <property type="entry name" value="FGAM_synth_I"/>
    <property type="match status" value="1"/>
</dbReference>
<dbReference type="NCBIfam" id="NF002957">
    <property type="entry name" value="PRK03619.1"/>
    <property type="match status" value="1"/>
</dbReference>
<dbReference type="PANTHER" id="PTHR47552">
    <property type="entry name" value="PHOSPHORIBOSYLFORMYLGLYCINAMIDINE SYNTHASE SUBUNIT PURQ"/>
    <property type="match status" value="1"/>
</dbReference>
<dbReference type="PANTHER" id="PTHR47552:SF1">
    <property type="entry name" value="PHOSPHORIBOSYLFORMYLGLYCINAMIDINE SYNTHASE SUBUNIT PURQ"/>
    <property type="match status" value="1"/>
</dbReference>
<dbReference type="Pfam" id="PF13507">
    <property type="entry name" value="GATase_5"/>
    <property type="match status" value="1"/>
</dbReference>
<dbReference type="PIRSF" id="PIRSF001586">
    <property type="entry name" value="FGAM_synth_I"/>
    <property type="match status" value="1"/>
</dbReference>
<dbReference type="SMART" id="SM01211">
    <property type="entry name" value="GATase_5"/>
    <property type="match status" value="1"/>
</dbReference>
<dbReference type="SUPFAM" id="SSF52317">
    <property type="entry name" value="Class I glutamine amidotransferase-like"/>
    <property type="match status" value="1"/>
</dbReference>
<dbReference type="PROSITE" id="PS51273">
    <property type="entry name" value="GATASE_TYPE_1"/>
    <property type="match status" value="1"/>
</dbReference>
<evidence type="ECO:0000255" key="1">
    <source>
        <dbReference type="HAMAP-Rule" id="MF_00421"/>
    </source>
</evidence>